<dbReference type="EC" id="4.6.1.26" evidence="5"/>
<dbReference type="EMBL" id="FUWG01000011">
    <property type="protein sequence ID" value="SJZ54745.1"/>
    <property type="molecule type" value="Genomic_DNA"/>
</dbReference>
<dbReference type="RefSeq" id="WP_200805309.1">
    <property type="nucleotide sequence ID" value="NZ_FUWG01000011.1"/>
</dbReference>
<dbReference type="SMR" id="A0A1T4LJ54"/>
<dbReference type="STRING" id="261392.SAMN02745149_01624"/>
<dbReference type="GeneID" id="78316907"/>
<dbReference type="Proteomes" id="UP000190423">
    <property type="component" value="Unassembled WGS sequence"/>
</dbReference>
<dbReference type="GO" id="GO:0005737">
    <property type="term" value="C:cytoplasm"/>
    <property type="evidence" value="ECO:0007669"/>
    <property type="project" value="UniProtKB-SubCell"/>
</dbReference>
<dbReference type="GO" id="GO:0004016">
    <property type="term" value="F:adenylate cyclase activity"/>
    <property type="evidence" value="ECO:0007669"/>
    <property type="project" value="UniProtKB-ARBA"/>
</dbReference>
<dbReference type="GO" id="GO:0046872">
    <property type="term" value="F:metal ion binding"/>
    <property type="evidence" value="ECO:0007669"/>
    <property type="project" value="UniProtKB-KW"/>
</dbReference>
<dbReference type="GO" id="GO:0000166">
    <property type="term" value="F:nucleotide binding"/>
    <property type="evidence" value="ECO:0007669"/>
    <property type="project" value="UniProtKB-KW"/>
</dbReference>
<dbReference type="GO" id="GO:0009190">
    <property type="term" value="P:cyclic nucleotide biosynthetic process"/>
    <property type="evidence" value="ECO:0007669"/>
    <property type="project" value="InterPro"/>
</dbReference>
<dbReference type="GO" id="GO:0051607">
    <property type="term" value="P:defense response to virus"/>
    <property type="evidence" value="ECO:0007669"/>
    <property type="project" value="UniProtKB-KW"/>
</dbReference>
<dbReference type="GO" id="GO:0035556">
    <property type="term" value="P:intracellular signal transduction"/>
    <property type="evidence" value="ECO:0007669"/>
    <property type="project" value="InterPro"/>
</dbReference>
<dbReference type="Gene3D" id="3.30.70.1230">
    <property type="entry name" value="Nucleotide cyclase"/>
    <property type="match status" value="1"/>
</dbReference>
<dbReference type="InterPro" id="IPR001054">
    <property type="entry name" value="A/G_cyclase"/>
</dbReference>
<dbReference type="InterPro" id="IPR029787">
    <property type="entry name" value="Nucleotide_cyclase"/>
</dbReference>
<dbReference type="Pfam" id="PF00211">
    <property type="entry name" value="Guanylate_cyc"/>
    <property type="match status" value="1"/>
</dbReference>
<dbReference type="SUPFAM" id="SSF55073">
    <property type="entry name" value="Nucleotide cyclase"/>
    <property type="match status" value="1"/>
</dbReference>
<dbReference type="PROSITE" id="PS50125">
    <property type="entry name" value="GUANYLATE_CYCLASE_2"/>
    <property type="match status" value="1"/>
</dbReference>
<evidence type="ECO:0000250" key="1">
    <source>
        <dbReference type="UniProtKB" id="A0A0J5ZXG5"/>
    </source>
</evidence>
<evidence type="ECO:0000250" key="2">
    <source>
        <dbReference type="UniProtKB" id="P0DV24"/>
    </source>
</evidence>
<evidence type="ECO:0000250" key="3">
    <source>
        <dbReference type="UniProtKB" id="P0DV40"/>
    </source>
</evidence>
<evidence type="ECO:0000255" key="4">
    <source>
        <dbReference type="PROSITE-ProRule" id="PRU00099"/>
    </source>
</evidence>
<evidence type="ECO:0000269" key="5">
    <source>
    </source>
</evidence>
<evidence type="ECO:0000303" key="6">
    <source>
    </source>
</evidence>
<evidence type="ECO:0000303" key="7">
    <source ref="1"/>
</evidence>
<evidence type="ECO:0000305" key="8"/>
<evidence type="ECO:0000305" key="9">
    <source>
    </source>
</evidence>
<name>PYCC_TREPO</name>
<reference key="1">
    <citation type="submission" date="2017-02" db="EMBL/GenBank/DDBJ databases">
        <authorList>
            <person name="Varghese N."/>
        </authorList>
    </citation>
    <scope>NUCLEOTIDE SEQUENCE [LARGE SCALE GENOMIC DNA]</scope>
    <source>
        <strain>ATCC BAA-908 / CIP 108245 / JCM 2342 / 14V28</strain>
    </source>
</reference>
<reference key="2">
    <citation type="journal article" date="2021" name="Cell">
        <title>Cyclic CMP and cyclic UMP mediate bacterial immunity against phages.</title>
        <authorList>
            <person name="Tal N."/>
            <person name="Morehouse B.R."/>
            <person name="Millman A."/>
            <person name="Stokar-Avihail A."/>
            <person name="Avraham C."/>
            <person name="Fedorenko T."/>
            <person name="Yirmiya E."/>
            <person name="Herbst E."/>
            <person name="Brandis A."/>
            <person name="Mehlman T."/>
            <person name="Oppenheimer-Shaanan Y."/>
            <person name="Keszei A.F.A."/>
            <person name="Shao S."/>
            <person name="Amitai G."/>
            <person name="Kranzusch P.J."/>
            <person name="Sorek R."/>
        </authorList>
    </citation>
    <scope>FUNCTION</scope>
    <scope>CATALYTIC ACTIVITY</scope>
    <scope>CLASSIFICATION</scope>
    <source>
        <strain>ATCC BAA-908 / CIP 108245 / JCM 2342 / 14V28</strain>
    </source>
</reference>
<comment type="function">
    <text evidence="9">Pycsar (pyrimidine cyclase system for antiphage resistance) provides immunity against bacteriophage. The pyrimidine cyclase (PycC) synthesizes cyclic nucleotides in response to infection; these serve as specific second messenger signals. The signals activate the adjacent effector, leading to bacterial cell death and abortive phage infection. A clade C Pycsar system.</text>
</comment>
<comment type="function">
    <text evidence="5 9">The pyrimidine cyclase gene of a two-gene Pycsar system, weakly generates cyclic UMP (cUMP) from UTP, has little to no activity on ATP, CTP or GTP (PubMed:34644530). Expression of this and adjacent effector TpPycTM (AC A0A1T4LJG1) probably confers resistance to bacteriophage. The genes are probably only expressed in response to bacteriophage infection (Probable).</text>
</comment>
<comment type="catalytic activity">
    <reaction evidence="5">
        <text>UTP = 3',5'-cyclic UMP + diphosphate</text>
        <dbReference type="Rhea" id="RHEA:69603"/>
        <dbReference type="ChEBI" id="CHEBI:33019"/>
        <dbReference type="ChEBI" id="CHEBI:46398"/>
        <dbReference type="ChEBI" id="CHEBI:184387"/>
        <dbReference type="EC" id="4.6.1.26"/>
    </reaction>
</comment>
<comment type="cofactor">
    <cofactor evidence="2">
        <name>Mn(2+)</name>
        <dbReference type="ChEBI" id="CHEBI:29035"/>
    </cofactor>
</comment>
<comment type="subunit">
    <text evidence="1">Homodimer.</text>
</comment>
<comment type="subcellular location">
    <subcellularLocation>
        <location evidence="8">Cytoplasm</location>
    </subcellularLocation>
</comment>
<comment type="similarity">
    <text evidence="9">Belongs to the adenylyl cyclase class-4/guanylyl cyclase family. Pyrimidine cyclase subfamily.</text>
</comment>
<protein>
    <recommendedName>
        <fullName evidence="6">Uridylate cyclase</fullName>
        <ecNumber evidence="5">4.6.1.26</ecNumber>
    </recommendedName>
    <alternativeName>
        <fullName>Cyclic UMP synthase</fullName>
        <shortName evidence="6">cUMP synthase</shortName>
    </alternativeName>
    <alternativeName>
        <fullName evidence="6">TpPycC</fullName>
    </alternativeName>
</protein>
<sequence>MKNDNGQQLSLTQALDLLKSRQGKNFKTADKIIENFCFYDYSNIIMKYDYKSGKKRILNILNSELDVENLNELPCDEKLTFSNAYYSWVTAIFVDIRKSTELFTNENKKDVSRLIRSFTSEIIEIINQGDNLREIGIRGDCVYGIFTTPKKSQINEVFDMACYVNTMIKMLNKLLIKEDIPQIMVGIGVSSAQELVVKAGRKGSGVNNKVWIGDAVTKAANMSGKGNKNHNLPIIISELTYKNLNDHNKGLMSSRKYNDDLDYYYDCDLIISAFNDWINKGMLDNE</sequence>
<feature type="chain" id="PRO_0000455228" description="Uridylate cyclase">
    <location>
        <begin position="1"/>
        <end position="286"/>
    </location>
</feature>
<feature type="domain" description="Guanylate cyclase" evidence="4">
    <location>
        <begin position="90"/>
        <end position="223"/>
    </location>
</feature>
<feature type="binding site" evidence="3 9">
    <location>
        <position position="93"/>
    </location>
    <ligand>
        <name>a ribonucleoside 5'-triphosphate</name>
        <dbReference type="ChEBI" id="CHEBI:61557"/>
    </ligand>
</feature>
<feature type="binding site" evidence="9">
    <location>
        <position position="95"/>
    </location>
    <ligand>
        <name>Mn(2+)</name>
        <dbReference type="ChEBI" id="CHEBI:29035"/>
        <label>1</label>
    </ligand>
</feature>
<feature type="binding site" evidence="9">
    <location>
        <position position="95"/>
    </location>
    <ligand>
        <name>Mn(2+)</name>
        <dbReference type="ChEBI" id="CHEBI:29035"/>
        <label>2</label>
    </ligand>
</feature>
<feature type="binding site" evidence="9">
    <location>
        <position position="96"/>
    </location>
    <ligand>
        <name>Mn(2+)</name>
        <dbReference type="ChEBI" id="CHEBI:29035"/>
        <label>2</label>
    </ligand>
</feature>
<feature type="binding site" evidence="9">
    <location>
        <position position="140"/>
    </location>
    <ligand>
        <name>Mn(2+)</name>
        <dbReference type="ChEBI" id="CHEBI:29035"/>
        <label>1</label>
    </ligand>
</feature>
<feature type="binding site" evidence="9">
    <location>
        <position position="140"/>
    </location>
    <ligand>
        <name>Mn(2+)</name>
        <dbReference type="ChEBI" id="CHEBI:29035"/>
        <label>2</label>
    </ligand>
</feature>
<proteinExistence type="evidence at protein level"/>
<accession>A0A1T4LJ54</accession>
<gene>
    <name evidence="6" type="primary">pycC</name>
    <name evidence="7" type="ORF">SAMN02745149_01624</name>
</gene>
<organism>
    <name type="scientific">Treponema porcinum</name>
    <dbReference type="NCBI Taxonomy" id="261392"/>
    <lineage>
        <taxon>Bacteria</taxon>
        <taxon>Pseudomonadati</taxon>
        <taxon>Spirochaetota</taxon>
        <taxon>Spirochaetia</taxon>
        <taxon>Spirochaetales</taxon>
        <taxon>Treponemataceae</taxon>
        <taxon>Treponema</taxon>
    </lineage>
</organism>
<keyword id="KW-0051">Antiviral defense</keyword>
<keyword id="KW-0963">Cytoplasm</keyword>
<keyword id="KW-0456">Lyase</keyword>
<keyword id="KW-0464">Manganese</keyword>
<keyword id="KW-0479">Metal-binding</keyword>
<keyword id="KW-0547">Nucleotide-binding</keyword>
<keyword id="KW-1185">Reference proteome</keyword>